<gene>
    <name evidence="1" type="primary">murI</name>
    <name type="ordered locus">SPT_1798</name>
</gene>
<evidence type="ECO:0000255" key="1">
    <source>
        <dbReference type="HAMAP-Rule" id="MF_00258"/>
    </source>
</evidence>
<name>MURI_STRZT</name>
<feature type="chain" id="PRO_1000125625" description="Glutamate racemase">
    <location>
        <begin position="1"/>
        <end position="264"/>
    </location>
</feature>
<feature type="active site" description="Proton donor/acceptor" evidence="1">
    <location>
        <position position="73"/>
    </location>
</feature>
<feature type="active site" description="Proton donor/acceptor" evidence="1">
    <location>
        <position position="183"/>
    </location>
</feature>
<feature type="binding site" evidence="1">
    <location>
        <begin position="10"/>
        <end position="11"/>
    </location>
    <ligand>
        <name>substrate</name>
    </ligand>
</feature>
<feature type="binding site" evidence="1">
    <location>
        <begin position="42"/>
        <end position="43"/>
    </location>
    <ligand>
        <name>substrate</name>
    </ligand>
</feature>
<feature type="binding site" evidence="1">
    <location>
        <begin position="74"/>
        <end position="75"/>
    </location>
    <ligand>
        <name>substrate</name>
    </ligand>
</feature>
<feature type="binding site" evidence="1">
    <location>
        <begin position="184"/>
        <end position="185"/>
    </location>
    <ligand>
        <name>substrate</name>
    </ligand>
</feature>
<keyword id="KW-0133">Cell shape</keyword>
<keyword id="KW-0961">Cell wall biogenesis/degradation</keyword>
<keyword id="KW-0413">Isomerase</keyword>
<keyword id="KW-0573">Peptidoglycan synthesis</keyword>
<protein>
    <recommendedName>
        <fullName evidence="1">Glutamate racemase</fullName>
        <ecNumber evidence="1">5.1.1.3</ecNumber>
    </recommendedName>
</protein>
<organism>
    <name type="scientific">Streptococcus pneumoniae (strain Taiwan19F-14)</name>
    <dbReference type="NCBI Taxonomy" id="487213"/>
    <lineage>
        <taxon>Bacteria</taxon>
        <taxon>Bacillati</taxon>
        <taxon>Bacillota</taxon>
        <taxon>Bacilli</taxon>
        <taxon>Lactobacillales</taxon>
        <taxon>Streptococcaceae</taxon>
        <taxon>Streptococcus</taxon>
    </lineage>
</organism>
<accession>C1CTB1</accession>
<proteinExistence type="inferred from homology"/>
<comment type="function">
    <text evidence="1">Provides the (R)-glutamate required for cell wall biosynthesis.</text>
</comment>
<comment type="catalytic activity">
    <reaction evidence="1">
        <text>L-glutamate = D-glutamate</text>
        <dbReference type="Rhea" id="RHEA:12813"/>
        <dbReference type="ChEBI" id="CHEBI:29985"/>
        <dbReference type="ChEBI" id="CHEBI:29986"/>
        <dbReference type="EC" id="5.1.1.3"/>
    </reaction>
</comment>
<comment type="pathway">
    <text evidence="1">Cell wall biogenesis; peptidoglycan biosynthesis.</text>
</comment>
<comment type="similarity">
    <text evidence="1">Belongs to the aspartate/glutamate racemases family.</text>
</comment>
<dbReference type="EC" id="5.1.1.3" evidence="1"/>
<dbReference type="EMBL" id="CP000921">
    <property type="protein sequence ID" value="ACO23859.1"/>
    <property type="molecule type" value="Genomic_DNA"/>
</dbReference>
<dbReference type="SMR" id="C1CTB1"/>
<dbReference type="KEGG" id="snt:SPT_1798"/>
<dbReference type="HOGENOM" id="CLU_052344_0_2_9"/>
<dbReference type="UniPathway" id="UPA00219"/>
<dbReference type="GO" id="GO:0008881">
    <property type="term" value="F:glutamate racemase activity"/>
    <property type="evidence" value="ECO:0007669"/>
    <property type="project" value="UniProtKB-UniRule"/>
</dbReference>
<dbReference type="GO" id="GO:0071555">
    <property type="term" value="P:cell wall organization"/>
    <property type="evidence" value="ECO:0007669"/>
    <property type="project" value="UniProtKB-KW"/>
</dbReference>
<dbReference type="GO" id="GO:0009252">
    <property type="term" value="P:peptidoglycan biosynthetic process"/>
    <property type="evidence" value="ECO:0007669"/>
    <property type="project" value="UniProtKB-UniRule"/>
</dbReference>
<dbReference type="GO" id="GO:0008360">
    <property type="term" value="P:regulation of cell shape"/>
    <property type="evidence" value="ECO:0007669"/>
    <property type="project" value="UniProtKB-KW"/>
</dbReference>
<dbReference type="FunFam" id="3.40.50.1860:FF:000002">
    <property type="entry name" value="Glutamate racemase"/>
    <property type="match status" value="1"/>
</dbReference>
<dbReference type="Gene3D" id="3.40.50.1860">
    <property type="match status" value="2"/>
</dbReference>
<dbReference type="HAMAP" id="MF_00258">
    <property type="entry name" value="Glu_racemase"/>
    <property type="match status" value="1"/>
</dbReference>
<dbReference type="InterPro" id="IPR015942">
    <property type="entry name" value="Asp/Glu/hydantoin_racemase"/>
</dbReference>
<dbReference type="InterPro" id="IPR001920">
    <property type="entry name" value="Asp/Glu_race"/>
</dbReference>
<dbReference type="InterPro" id="IPR018187">
    <property type="entry name" value="Asp/Glu_racemase_AS_1"/>
</dbReference>
<dbReference type="InterPro" id="IPR033134">
    <property type="entry name" value="Asp/Glu_racemase_AS_2"/>
</dbReference>
<dbReference type="InterPro" id="IPR004391">
    <property type="entry name" value="Glu_race"/>
</dbReference>
<dbReference type="NCBIfam" id="TIGR00067">
    <property type="entry name" value="glut_race"/>
    <property type="match status" value="1"/>
</dbReference>
<dbReference type="NCBIfam" id="NF002035">
    <property type="entry name" value="PRK00865.1-3"/>
    <property type="match status" value="1"/>
</dbReference>
<dbReference type="PANTHER" id="PTHR21198">
    <property type="entry name" value="GLUTAMATE RACEMASE"/>
    <property type="match status" value="1"/>
</dbReference>
<dbReference type="PANTHER" id="PTHR21198:SF2">
    <property type="entry name" value="GLUTAMATE RACEMASE"/>
    <property type="match status" value="1"/>
</dbReference>
<dbReference type="Pfam" id="PF01177">
    <property type="entry name" value="Asp_Glu_race"/>
    <property type="match status" value="1"/>
</dbReference>
<dbReference type="SUPFAM" id="SSF53681">
    <property type="entry name" value="Aspartate/glutamate racemase"/>
    <property type="match status" value="2"/>
</dbReference>
<dbReference type="PROSITE" id="PS00923">
    <property type="entry name" value="ASP_GLU_RACEMASE_1"/>
    <property type="match status" value="1"/>
</dbReference>
<dbReference type="PROSITE" id="PS00924">
    <property type="entry name" value="ASP_GLU_RACEMASE_2"/>
    <property type="match status" value="1"/>
</dbReference>
<sequence length="264" mass="29138">MDNRPIGFLDSGVGGLTVVRELMRQLPHEEIVYIGDSARAPYGPRPAEQIREYTWQLVNFLLTKDVKMIVIACNTATAVVWEEIKAQLDIPVLGVILPGASAAIKSSQGGKIGVIGTPMTVQSDIYRQKIHDLDPDLQVESLACPKFAPLVESGALSTSVTKKVVYETLRPLVGKVDSLILGCTHYPLLRPIIQNVMGPKVQLIDSGAECVRDISVLLNYFEINRGRDAGPLHHRFYTTASSQSFAQIGEEWLEKEIHVEHVEL</sequence>
<reference key="1">
    <citation type="journal article" date="2010" name="Genome Biol.">
        <title>Structure and dynamics of the pan-genome of Streptococcus pneumoniae and closely related species.</title>
        <authorList>
            <person name="Donati C."/>
            <person name="Hiller N.L."/>
            <person name="Tettelin H."/>
            <person name="Muzzi A."/>
            <person name="Croucher N.J."/>
            <person name="Angiuoli S.V."/>
            <person name="Oggioni M."/>
            <person name="Dunning Hotopp J.C."/>
            <person name="Hu F.Z."/>
            <person name="Riley D.R."/>
            <person name="Covacci A."/>
            <person name="Mitchell T.J."/>
            <person name="Bentley S.D."/>
            <person name="Kilian M."/>
            <person name="Ehrlich G.D."/>
            <person name="Rappuoli R."/>
            <person name="Moxon E.R."/>
            <person name="Masignani V."/>
        </authorList>
    </citation>
    <scope>NUCLEOTIDE SEQUENCE [LARGE SCALE GENOMIC DNA]</scope>
    <source>
        <strain>Taiwan19F-14</strain>
    </source>
</reference>